<gene>
    <name evidence="6" type="primary">PDP1</name>
    <name evidence="8" type="ordered locus">At5g27650</name>
    <name evidence="9" type="ORF">T1G16.4</name>
</gene>
<protein>
    <recommendedName>
        <fullName evidence="6">PWWP domain-containing protein 1</fullName>
    </recommendedName>
</protein>
<organism>
    <name type="scientific">Arabidopsis thaliana</name>
    <name type="common">Mouse-ear cress</name>
    <dbReference type="NCBI Taxonomy" id="3702"/>
    <lineage>
        <taxon>Eukaryota</taxon>
        <taxon>Viridiplantae</taxon>
        <taxon>Streptophyta</taxon>
        <taxon>Embryophyta</taxon>
        <taxon>Tracheophyta</taxon>
        <taxon>Spermatophyta</taxon>
        <taxon>Magnoliopsida</taxon>
        <taxon>eudicotyledons</taxon>
        <taxon>Gunneridae</taxon>
        <taxon>Pentapetalae</taxon>
        <taxon>rosids</taxon>
        <taxon>malvids</taxon>
        <taxon>Brassicales</taxon>
        <taxon>Brassicaceae</taxon>
        <taxon>Camelineae</taxon>
        <taxon>Arabidopsis</taxon>
    </lineage>
</organism>
<dbReference type="EMBL" id="AC069556">
    <property type="status" value="NOT_ANNOTATED_CDS"/>
    <property type="molecule type" value="Genomic_DNA"/>
</dbReference>
<dbReference type="EMBL" id="CP002688">
    <property type="protein sequence ID" value="AED93711.1"/>
    <property type="molecule type" value="Genomic_DNA"/>
</dbReference>
<dbReference type="EMBL" id="AB493765">
    <property type="protein sequence ID" value="BAH30603.1"/>
    <property type="molecule type" value="mRNA"/>
</dbReference>
<dbReference type="RefSeq" id="NP_198117.2">
    <property type="nucleotide sequence ID" value="NM_122647.3"/>
</dbReference>
<dbReference type="FunCoup" id="F4K4D6">
    <property type="interactions" value="2201"/>
</dbReference>
<dbReference type="STRING" id="3702.F4K4D6"/>
<dbReference type="iPTMnet" id="F4K4D6"/>
<dbReference type="PaxDb" id="3702-AT5G27650.1"/>
<dbReference type="ProteomicsDB" id="216517"/>
<dbReference type="EnsemblPlants" id="AT5G27650.1">
    <property type="protein sequence ID" value="AT5G27650.1"/>
    <property type="gene ID" value="AT5G27650"/>
</dbReference>
<dbReference type="GeneID" id="832827"/>
<dbReference type="Gramene" id="AT5G27650.1">
    <property type="protein sequence ID" value="AT5G27650.1"/>
    <property type="gene ID" value="AT5G27650"/>
</dbReference>
<dbReference type="KEGG" id="ath:AT5G27650"/>
<dbReference type="Araport" id="AT5G27650"/>
<dbReference type="TAIR" id="AT5G27650">
    <property type="gene designation" value="PDP1"/>
</dbReference>
<dbReference type="eggNOG" id="ENOG502QQX0">
    <property type="taxonomic scope" value="Eukaryota"/>
</dbReference>
<dbReference type="HOGENOM" id="CLU_006566_0_0_1"/>
<dbReference type="InParanoid" id="F4K4D6"/>
<dbReference type="OMA" id="MIESPRG"/>
<dbReference type="PhylomeDB" id="F4K4D6"/>
<dbReference type="PRO" id="PR:F4K4D6"/>
<dbReference type="Proteomes" id="UP000006548">
    <property type="component" value="Chromosome 5"/>
</dbReference>
<dbReference type="ExpressionAtlas" id="F4K4D6">
    <property type="expression patterns" value="baseline and differential"/>
</dbReference>
<dbReference type="GO" id="GO:0035098">
    <property type="term" value="C:ESC/E(Z) complex"/>
    <property type="evidence" value="ECO:0000314"/>
    <property type="project" value="UniProtKB"/>
</dbReference>
<dbReference type="GO" id="GO:0040029">
    <property type="term" value="P:epigenetic regulation of gene expression"/>
    <property type="evidence" value="ECO:0000315"/>
    <property type="project" value="UniProtKB"/>
</dbReference>
<dbReference type="GO" id="GO:0009908">
    <property type="term" value="P:flower development"/>
    <property type="evidence" value="ECO:0007669"/>
    <property type="project" value="UniProtKB-KW"/>
</dbReference>
<dbReference type="GO" id="GO:0006355">
    <property type="term" value="P:regulation of DNA-templated transcription"/>
    <property type="evidence" value="ECO:0000315"/>
    <property type="project" value="UniProtKB"/>
</dbReference>
<dbReference type="GO" id="GO:2000028">
    <property type="term" value="P:regulation of photoperiodism, flowering"/>
    <property type="evidence" value="ECO:0000315"/>
    <property type="project" value="UniProtKB"/>
</dbReference>
<dbReference type="CDD" id="cd05162">
    <property type="entry name" value="PWWP"/>
    <property type="match status" value="1"/>
</dbReference>
<dbReference type="FunFam" id="2.30.30.140:FF:000115">
    <property type="entry name" value="Tudor/PWWP/MBT superfamily protein"/>
    <property type="match status" value="1"/>
</dbReference>
<dbReference type="Gene3D" id="2.30.30.140">
    <property type="match status" value="1"/>
</dbReference>
<dbReference type="InterPro" id="IPR052657">
    <property type="entry name" value="PDP_family_Arabidopsis"/>
</dbReference>
<dbReference type="InterPro" id="IPR000313">
    <property type="entry name" value="PWWP_dom"/>
</dbReference>
<dbReference type="PANTHER" id="PTHR10688">
    <property type="entry name" value="PWWP DOMAIN-CONTAINING PROTEIN"/>
    <property type="match status" value="1"/>
</dbReference>
<dbReference type="PANTHER" id="PTHR10688:SF5">
    <property type="entry name" value="PWWP DOMAIN-CONTAINING PROTEIN 1-RELATED"/>
    <property type="match status" value="1"/>
</dbReference>
<dbReference type="Pfam" id="PF00855">
    <property type="entry name" value="PWWP"/>
    <property type="match status" value="1"/>
</dbReference>
<dbReference type="SMART" id="SM00293">
    <property type="entry name" value="PWWP"/>
    <property type="match status" value="1"/>
</dbReference>
<dbReference type="SUPFAM" id="SSF63748">
    <property type="entry name" value="Tudor/PWWP/MBT"/>
    <property type="match status" value="1"/>
</dbReference>
<dbReference type="PROSITE" id="PS50812">
    <property type="entry name" value="PWWP"/>
    <property type="match status" value="1"/>
</dbReference>
<comment type="function">
    <text evidence="5">Together with PDP2, PDP3 and PDP6, interacts with MSI4/FVE and MSI5 to suppress FLC, MAF4 and MAF5 expression by regulating the function of the PRC2 complex and modulating H3K27me3 level, thereby promoting flowering.</text>
</comment>
<comment type="subunit">
    <text evidence="1 5">Interacts with MSI4/FVE (PubMed:29314758). Component of the PRC2 (polycomb repressive complex 2) complex which regulates histone methylation on histone H3K27 (By similarity).</text>
</comment>
<comment type="subcellular location">
    <subcellularLocation>
        <location evidence="3">Nucleus</location>
    </subcellularLocation>
</comment>
<comment type="disruption phenotype">
    <text evidence="5">Delayed flowering associated with reduced H3K27me3 level on FLC (PubMed:29314758). The triple mutant pdp1 pdp2 pdp3 has increased levels of FLC, MAF4 and MAF5 expression, but decreased expression of FT (PubMed:29314758).</text>
</comment>
<comment type="similarity">
    <text evidence="7">Belongs to the PDP family.</text>
</comment>
<name>PDP1_ARATH</name>
<proteinExistence type="evidence at protein level"/>
<sequence length="1072" mass="118096">MYKTKLIPVMNEDAVIVQQTDSIQDPKVTPDDTVVDSSGDVHEAIDDDVEASSPMELDSAVTNDARVLESERSEKDGVVGSEEEDEIKSEDVLIDKDDESSEVKEEEEEEDGSDDQSSELGSEADEKELDLGLKEEKKGVSDYKSLLSEFDDYVASEKMGSGVSRALSYGFEVGDLVWGKVKSHPWWPGHIFNEAFASPSVRRMRRIDHVLVAFFGDSSYGWFDPAELIPFEPNLEEKSQQTVSKHFVRAVEEAKDEASRRSALGLTCKCRNPYNFRPSNVEDYFAVDVPDYELQAVYSVDQIKNSRDKFLPAETISFVKQLALAPQECDPDSLKFMKKKAVVFAFRKSVFEEFDETYAQAFGTKSPRSSVSTLEPHNRAPPRAPLSGPLVIAETLGDLKSSKKPTKVKVSKKKDKYLLKRRDEAGDKSVQFGEIEASSEASHIQGIDGSLDGDFGLQRRAPTLQTPMKDEKSGIVSMDFASSNTAIPGKEFSASKPSLDEEKGLAEKSKERMEERAAVLPEHGKSEAMASLKPKEEAGTDLGSAGSSLQPLLESHTSASEGKSSTGSVIKKVKVAKRSSSEMSSENPPSEPKKKKKKKKEPDSDHPVKRKNLYSGEAGAKKLSQLGSAHLQTYMEADVPQLLSHLQDLSLDPFHGLSVASFGTARKFFLRFRSLNYQKSLSVSSSDATVENARDTKPSKPVKTVKRTEDPSKAGKKRLSSDRQDEIPSAKKLKKTNQLKSMASEKKIIREAKDSIKPIREPSRVVQAKPARGQTGKKTAPSVKVVEPTMLVMKFPPGTSLPSAALLKARFGRFGLLDQSAIRVFWKSSTCRVVFLYKADAQTAFRYATGNNTLFGNVNVKYFLRDVDAPKAEPREPENTKEDDEPQSQWLDQAPPLHQPTLPPPNVNLKSCLKKPVDDPSSSSNNGNGNRAAVRVKFMLGGEENSSKANTEPPQVTMTLNRNSGPSSSSSSVPMEFVSKKFQNVVHHQQLPPSTLPPILPLPPQYTKPQQLPIKPVDHVEPPMPPSRNFRGPIPAVSAGDISHQMLNLLSKCNEVVANVTGLLGYVPYHPL</sequence>
<evidence type="ECO:0000250" key="1">
    <source>
        <dbReference type="UniProtKB" id="Q9FNE4"/>
    </source>
</evidence>
<evidence type="ECO:0000255" key="2">
    <source>
        <dbReference type="PROSITE-ProRule" id="PRU00162"/>
    </source>
</evidence>
<evidence type="ECO:0000255" key="3">
    <source>
        <dbReference type="PROSITE-ProRule" id="PRU00768"/>
    </source>
</evidence>
<evidence type="ECO:0000256" key="4">
    <source>
        <dbReference type="SAM" id="MobiDB-lite"/>
    </source>
</evidence>
<evidence type="ECO:0000269" key="5">
    <source>
    </source>
</evidence>
<evidence type="ECO:0000303" key="6">
    <source>
    </source>
</evidence>
<evidence type="ECO:0000305" key="7"/>
<evidence type="ECO:0000312" key="8">
    <source>
        <dbReference type="Araport" id="AT5G27650"/>
    </source>
</evidence>
<evidence type="ECO:0000312" key="9">
    <source>
        <dbReference type="EMBL" id="AED93711.1"/>
    </source>
</evidence>
<reference key="1">
    <citation type="journal article" date="2000" name="Nature">
        <title>Sequence and analysis of chromosome 5 of the plant Arabidopsis thaliana.</title>
        <authorList>
            <person name="Tabata S."/>
            <person name="Kaneko T."/>
            <person name="Nakamura Y."/>
            <person name="Kotani H."/>
            <person name="Kato T."/>
            <person name="Asamizu E."/>
            <person name="Miyajima N."/>
            <person name="Sasamoto S."/>
            <person name="Kimura T."/>
            <person name="Hosouchi T."/>
            <person name="Kawashima K."/>
            <person name="Kohara M."/>
            <person name="Matsumoto M."/>
            <person name="Matsuno A."/>
            <person name="Muraki A."/>
            <person name="Nakayama S."/>
            <person name="Nakazaki N."/>
            <person name="Naruo K."/>
            <person name="Okumura S."/>
            <person name="Shinpo S."/>
            <person name="Takeuchi C."/>
            <person name="Wada T."/>
            <person name="Watanabe A."/>
            <person name="Yamada M."/>
            <person name="Yasuda M."/>
            <person name="Sato S."/>
            <person name="de la Bastide M."/>
            <person name="Huang E."/>
            <person name="Spiegel L."/>
            <person name="Gnoj L."/>
            <person name="O'Shaughnessy A."/>
            <person name="Preston R."/>
            <person name="Habermann K."/>
            <person name="Murray J."/>
            <person name="Johnson D."/>
            <person name="Rohlfing T."/>
            <person name="Nelson J."/>
            <person name="Stoneking T."/>
            <person name="Pepin K."/>
            <person name="Spieth J."/>
            <person name="Sekhon M."/>
            <person name="Armstrong J."/>
            <person name="Becker M."/>
            <person name="Belter E."/>
            <person name="Cordum H."/>
            <person name="Cordes M."/>
            <person name="Courtney L."/>
            <person name="Courtney W."/>
            <person name="Dante M."/>
            <person name="Du H."/>
            <person name="Edwards J."/>
            <person name="Fryman J."/>
            <person name="Haakensen B."/>
            <person name="Lamar E."/>
            <person name="Latreille P."/>
            <person name="Leonard S."/>
            <person name="Meyer R."/>
            <person name="Mulvaney E."/>
            <person name="Ozersky P."/>
            <person name="Riley A."/>
            <person name="Strowmatt C."/>
            <person name="Wagner-McPherson C."/>
            <person name="Wollam A."/>
            <person name="Yoakum M."/>
            <person name="Bell M."/>
            <person name="Dedhia N."/>
            <person name="Parnell L."/>
            <person name="Shah R."/>
            <person name="Rodriguez M."/>
            <person name="Hoon See L."/>
            <person name="Vil D."/>
            <person name="Baker J."/>
            <person name="Kirchoff K."/>
            <person name="Toth K."/>
            <person name="King L."/>
            <person name="Bahret A."/>
            <person name="Miller B."/>
            <person name="Marra M.A."/>
            <person name="Martienssen R."/>
            <person name="McCombie W.R."/>
            <person name="Wilson R.K."/>
            <person name="Murphy G."/>
            <person name="Bancroft I."/>
            <person name="Volckaert G."/>
            <person name="Wambutt R."/>
            <person name="Duesterhoeft A."/>
            <person name="Stiekema W."/>
            <person name="Pohl T."/>
            <person name="Entian K.-D."/>
            <person name="Terryn N."/>
            <person name="Hartley N."/>
            <person name="Bent E."/>
            <person name="Johnson S."/>
            <person name="Langham S.-A."/>
            <person name="McCullagh B."/>
            <person name="Robben J."/>
            <person name="Grymonprez B."/>
            <person name="Zimmermann W."/>
            <person name="Ramsperger U."/>
            <person name="Wedler H."/>
            <person name="Balke K."/>
            <person name="Wedler E."/>
            <person name="Peters S."/>
            <person name="van Staveren M."/>
            <person name="Dirkse W."/>
            <person name="Mooijman P."/>
            <person name="Klein Lankhorst R."/>
            <person name="Weitzenegger T."/>
            <person name="Bothe G."/>
            <person name="Rose M."/>
            <person name="Hauf J."/>
            <person name="Berneiser S."/>
            <person name="Hempel S."/>
            <person name="Feldpausch M."/>
            <person name="Lamberth S."/>
            <person name="Villarroel R."/>
            <person name="Gielen J."/>
            <person name="Ardiles W."/>
            <person name="Bents O."/>
            <person name="Lemcke K."/>
            <person name="Kolesov G."/>
            <person name="Mayer K.F.X."/>
            <person name="Rudd S."/>
            <person name="Schoof H."/>
            <person name="Schueller C."/>
            <person name="Zaccaria P."/>
            <person name="Mewes H.-W."/>
            <person name="Bevan M."/>
            <person name="Fransz P.F."/>
        </authorList>
    </citation>
    <scope>NUCLEOTIDE SEQUENCE [LARGE SCALE GENOMIC DNA]</scope>
    <source>
        <strain>cv. Columbia</strain>
    </source>
</reference>
<reference key="2">
    <citation type="journal article" date="2017" name="Plant J.">
        <title>Araport11: a complete reannotation of the Arabidopsis thaliana reference genome.</title>
        <authorList>
            <person name="Cheng C.Y."/>
            <person name="Krishnakumar V."/>
            <person name="Chan A.P."/>
            <person name="Thibaud-Nissen F."/>
            <person name="Schobel S."/>
            <person name="Town C.D."/>
        </authorList>
    </citation>
    <scope>GENOME REANNOTATION</scope>
    <source>
        <strain>cv. Columbia</strain>
    </source>
</reference>
<reference key="3">
    <citation type="submission" date="2009-03" db="EMBL/GenBank/DDBJ databases">
        <title>ORF cloning and analysis of Arabidopsis transcription factor genes.</title>
        <authorList>
            <person name="Fujita M."/>
        </authorList>
    </citation>
    <scope>NUCLEOTIDE SEQUENCE [MRNA] OF 10-1072</scope>
</reference>
<reference key="4">
    <citation type="journal article" date="2009" name="Plant Physiol.">
        <title>Large-scale Arabidopsis phosphoproteome profiling reveals novel chloroplast kinase substrates and phosphorylation networks.</title>
        <authorList>
            <person name="Reiland S."/>
            <person name="Messerli G."/>
            <person name="Baerenfaller K."/>
            <person name="Gerrits B."/>
            <person name="Endler A."/>
            <person name="Grossmann J."/>
            <person name="Gruissem W."/>
            <person name="Baginsky S."/>
        </authorList>
    </citation>
    <scope>IDENTIFICATION BY MASS SPECTROMETRY [LARGE SCALE ANALYSIS]</scope>
</reference>
<reference key="5">
    <citation type="journal article" date="2018" name="J. Integr. Plant Biol.">
        <title>Arabidopsis PWWP domain proteins mediate H3K27 trimethylation on FLC and regulate flowering time.</title>
        <authorList>
            <person name="Zhou J.X."/>
            <person name="Liu Z.W."/>
            <person name="Li Y.Q."/>
            <person name="Li L."/>
            <person name="Wang B."/>
            <person name="Chen S."/>
            <person name="He X.J."/>
        </authorList>
    </citation>
    <scope>FUNCTION</scope>
    <scope>DISRUPTION PHENOTYPE</scope>
    <scope>INTERACTION WITH MSI4/FVE</scope>
    <scope>SUBUNIT</scope>
    <scope>GENE FAMILY</scope>
    <scope>NOMENCLATURE</scope>
</reference>
<keyword id="KW-0287">Flowering</keyword>
<keyword id="KW-0539">Nucleus</keyword>
<keyword id="KW-1185">Reference proteome</keyword>
<keyword id="KW-0804">Transcription</keyword>
<keyword id="KW-0805">Transcription regulation</keyword>
<accession>F4K4D6</accession>
<accession>C0SVR2</accession>
<feature type="chain" id="PRO_0000453269" description="PWWP domain-containing protein 1">
    <location>
        <begin position="1"/>
        <end position="1072"/>
    </location>
</feature>
<feature type="domain" description="PWWP" evidence="2">
    <location>
        <begin position="173"/>
        <end position="234"/>
    </location>
</feature>
<feature type="region of interest" description="Disordered" evidence="4">
    <location>
        <begin position="21"/>
        <end position="133"/>
    </location>
</feature>
<feature type="region of interest" description="Disordered" evidence="4">
    <location>
        <begin position="365"/>
        <end position="387"/>
    </location>
</feature>
<feature type="region of interest" description="Disordered" evidence="4">
    <location>
        <begin position="486"/>
        <end position="619"/>
    </location>
</feature>
<feature type="region of interest" description="Disordered" evidence="4">
    <location>
        <begin position="681"/>
        <end position="738"/>
    </location>
</feature>
<feature type="region of interest" description="Disordered" evidence="4">
    <location>
        <begin position="871"/>
        <end position="931"/>
    </location>
</feature>
<feature type="region of interest" description="Disordered" evidence="4">
    <location>
        <begin position="944"/>
        <end position="973"/>
    </location>
</feature>
<feature type="short sequence motif" description="Nuclear localization signal 1" evidence="3">
    <location>
        <begin position="402"/>
        <end position="409"/>
    </location>
</feature>
<feature type="short sequence motif" description="Nuclear localization signal 2" evidence="3">
    <location>
        <begin position="596"/>
        <end position="603"/>
    </location>
</feature>
<feature type="short sequence motif" description="Nuclear localization signal 3" evidence="3">
    <location>
        <begin position="705"/>
        <end position="712"/>
    </location>
</feature>
<feature type="short sequence motif" description="Nuclear localization signal 4" evidence="3">
    <location>
        <begin position="733"/>
        <end position="740"/>
    </location>
</feature>
<feature type="compositionally biased region" description="Low complexity" evidence="4">
    <location>
        <begin position="25"/>
        <end position="38"/>
    </location>
</feature>
<feature type="compositionally biased region" description="Basic and acidic residues" evidence="4">
    <location>
        <begin position="66"/>
        <end position="77"/>
    </location>
</feature>
<feature type="compositionally biased region" description="Acidic residues" evidence="4">
    <location>
        <begin position="96"/>
        <end position="128"/>
    </location>
</feature>
<feature type="compositionally biased region" description="Polar residues" evidence="4">
    <location>
        <begin position="366"/>
        <end position="375"/>
    </location>
</feature>
<feature type="compositionally biased region" description="Basic and acidic residues" evidence="4">
    <location>
        <begin position="498"/>
        <end position="526"/>
    </location>
</feature>
<feature type="compositionally biased region" description="Polar residues" evidence="4">
    <location>
        <begin position="545"/>
        <end position="568"/>
    </location>
</feature>
<feature type="compositionally biased region" description="Basic and acidic residues" evidence="4">
    <location>
        <begin position="706"/>
        <end position="729"/>
    </location>
</feature>
<feature type="compositionally biased region" description="Basic and acidic residues" evidence="4">
    <location>
        <begin position="871"/>
        <end position="880"/>
    </location>
</feature>
<feature type="compositionally biased region" description="Pro residues" evidence="4">
    <location>
        <begin position="897"/>
        <end position="906"/>
    </location>
</feature>
<feature type="compositionally biased region" description="Low complexity" evidence="4">
    <location>
        <begin position="921"/>
        <end position="930"/>
    </location>
</feature>
<feature type="compositionally biased region" description="Polar residues" evidence="4">
    <location>
        <begin position="947"/>
        <end position="966"/>
    </location>
</feature>